<dbReference type="EC" id="3.6.4.13"/>
<dbReference type="EMBL" id="AAHF01000011">
    <property type="protein sequence ID" value="EAL86063.1"/>
    <property type="status" value="ALT_SEQ"/>
    <property type="molecule type" value="Genomic_DNA"/>
</dbReference>
<dbReference type="RefSeq" id="XP_748101.1">
    <property type="nucleotide sequence ID" value="XM_743008.1"/>
</dbReference>
<dbReference type="SMR" id="Q4WEB4"/>
<dbReference type="FunCoup" id="Q4WEB4">
    <property type="interactions" value="645"/>
</dbReference>
<dbReference type="STRING" id="330879.Q4WEB4"/>
<dbReference type="GeneID" id="3505629"/>
<dbReference type="KEGG" id="afm:AFUA_5G02410"/>
<dbReference type="eggNOG" id="KOG0328">
    <property type="taxonomic scope" value="Eukaryota"/>
</dbReference>
<dbReference type="HOGENOM" id="CLU_003041_1_0_1"/>
<dbReference type="InParanoid" id="Q4WEB4"/>
<dbReference type="OrthoDB" id="10265785at2759"/>
<dbReference type="Proteomes" id="UP000002530">
    <property type="component" value="Chromosome 5"/>
</dbReference>
<dbReference type="GO" id="GO:0071013">
    <property type="term" value="C:catalytic step 2 spliceosome"/>
    <property type="evidence" value="ECO:0000318"/>
    <property type="project" value="GO_Central"/>
</dbReference>
<dbReference type="GO" id="GO:0005730">
    <property type="term" value="C:nucleolus"/>
    <property type="evidence" value="ECO:0000318"/>
    <property type="project" value="GO_Central"/>
</dbReference>
<dbReference type="GO" id="GO:0005524">
    <property type="term" value="F:ATP binding"/>
    <property type="evidence" value="ECO:0007669"/>
    <property type="project" value="UniProtKB-KW"/>
</dbReference>
<dbReference type="GO" id="GO:0016887">
    <property type="term" value="F:ATP hydrolysis activity"/>
    <property type="evidence" value="ECO:0007669"/>
    <property type="project" value="RHEA"/>
</dbReference>
<dbReference type="GO" id="GO:0003729">
    <property type="term" value="F:mRNA binding"/>
    <property type="evidence" value="ECO:0000318"/>
    <property type="project" value="GO_Central"/>
</dbReference>
<dbReference type="GO" id="GO:0003724">
    <property type="term" value="F:RNA helicase activity"/>
    <property type="evidence" value="ECO:0000318"/>
    <property type="project" value="GO_Central"/>
</dbReference>
<dbReference type="GO" id="GO:0000398">
    <property type="term" value="P:mRNA splicing, via spliceosome"/>
    <property type="evidence" value="ECO:0000318"/>
    <property type="project" value="GO_Central"/>
</dbReference>
<dbReference type="GO" id="GO:0006364">
    <property type="term" value="P:rRNA processing"/>
    <property type="evidence" value="ECO:0007669"/>
    <property type="project" value="UniProtKB-KW"/>
</dbReference>
<dbReference type="CDD" id="cd18045">
    <property type="entry name" value="DEADc_EIF4AIII_DDX48"/>
    <property type="match status" value="1"/>
</dbReference>
<dbReference type="CDD" id="cd18787">
    <property type="entry name" value="SF2_C_DEAD"/>
    <property type="match status" value="1"/>
</dbReference>
<dbReference type="FunFam" id="3.40.50.300:FF:000031">
    <property type="entry name" value="Eukaryotic initiation factor 4A-III"/>
    <property type="match status" value="1"/>
</dbReference>
<dbReference type="FunFam" id="3.40.50.300:FF:000498">
    <property type="entry name" value="Eukaryotic initiation factor 4A-III"/>
    <property type="match status" value="1"/>
</dbReference>
<dbReference type="Gene3D" id="3.40.50.300">
    <property type="entry name" value="P-loop containing nucleotide triphosphate hydrolases"/>
    <property type="match status" value="2"/>
</dbReference>
<dbReference type="InterPro" id="IPR011545">
    <property type="entry name" value="DEAD/DEAH_box_helicase_dom"/>
</dbReference>
<dbReference type="InterPro" id="IPR014001">
    <property type="entry name" value="Helicase_ATP-bd"/>
</dbReference>
<dbReference type="InterPro" id="IPR001650">
    <property type="entry name" value="Helicase_C-like"/>
</dbReference>
<dbReference type="InterPro" id="IPR027417">
    <property type="entry name" value="P-loop_NTPase"/>
</dbReference>
<dbReference type="InterPro" id="IPR000629">
    <property type="entry name" value="RNA-helicase_DEAD-box_CS"/>
</dbReference>
<dbReference type="InterPro" id="IPR014014">
    <property type="entry name" value="RNA_helicase_DEAD_Q_motif"/>
</dbReference>
<dbReference type="PANTHER" id="PTHR47958">
    <property type="entry name" value="ATP-DEPENDENT RNA HELICASE DBP3"/>
    <property type="match status" value="1"/>
</dbReference>
<dbReference type="Pfam" id="PF00270">
    <property type="entry name" value="DEAD"/>
    <property type="match status" value="1"/>
</dbReference>
<dbReference type="Pfam" id="PF00271">
    <property type="entry name" value="Helicase_C"/>
    <property type="match status" value="1"/>
</dbReference>
<dbReference type="SMART" id="SM00487">
    <property type="entry name" value="DEXDc"/>
    <property type="match status" value="1"/>
</dbReference>
<dbReference type="SMART" id="SM00490">
    <property type="entry name" value="HELICc"/>
    <property type="match status" value="1"/>
</dbReference>
<dbReference type="SUPFAM" id="SSF52540">
    <property type="entry name" value="P-loop containing nucleoside triphosphate hydrolases"/>
    <property type="match status" value="1"/>
</dbReference>
<dbReference type="PROSITE" id="PS00039">
    <property type="entry name" value="DEAD_ATP_HELICASE"/>
    <property type="match status" value="1"/>
</dbReference>
<dbReference type="PROSITE" id="PS51192">
    <property type="entry name" value="HELICASE_ATP_BIND_1"/>
    <property type="match status" value="1"/>
</dbReference>
<dbReference type="PROSITE" id="PS51194">
    <property type="entry name" value="HELICASE_CTER"/>
    <property type="match status" value="1"/>
</dbReference>
<dbReference type="PROSITE" id="PS51195">
    <property type="entry name" value="Q_MOTIF"/>
    <property type="match status" value="1"/>
</dbReference>
<comment type="function">
    <text evidence="1">ATP-dependent RNA helicase involved in 40S ribosomal subunit biogenesis. Required for the processing and cleavage of 35S pre-rRNA at sites A0, A1, and A2, leading to mature 18S rRNA (By similarity).</text>
</comment>
<comment type="catalytic activity">
    <reaction>
        <text>ATP + H2O = ADP + phosphate + H(+)</text>
        <dbReference type="Rhea" id="RHEA:13065"/>
        <dbReference type="ChEBI" id="CHEBI:15377"/>
        <dbReference type="ChEBI" id="CHEBI:15378"/>
        <dbReference type="ChEBI" id="CHEBI:30616"/>
        <dbReference type="ChEBI" id="CHEBI:43474"/>
        <dbReference type="ChEBI" id="CHEBI:456216"/>
        <dbReference type="EC" id="3.6.4.13"/>
    </reaction>
</comment>
<comment type="subcellular location">
    <subcellularLocation>
        <location evidence="1">Nucleus</location>
        <location evidence="1">Nucleolus</location>
    </subcellularLocation>
</comment>
<comment type="domain">
    <text>The Q motif is unique to and characteristic of the DEAD box family of RNA helicases and controls ATP binding and hydrolysis.</text>
</comment>
<comment type="similarity">
    <text evidence="4">Belongs to the DEAD box helicase family. DDX48/FAL1 subfamily.</text>
</comment>
<comment type="sequence caution" evidence="4">
    <conflict type="erroneous gene model prediction">
        <sequence resource="EMBL-CDS" id="EAL86063"/>
    </conflict>
</comment>
<accession>Q4WEB4</accession>
<feature type="chain" id="PRO_0000232141" description="ATP-dependent RNA helicase fal1">
    <location>
        <begin position="1"/>
        <end position="398"/>
    </location>
</feature>
<feature type="domain" description="Helicase ATP-binding" evidence="2">
    <location>
        <begin position="55"/>
        <end position="225"/>
    </location>
</feature>
<feature type="domain" description="Helicase C-terminal" evidence="3">
    <location>
        <begin position="236"/>
        <end position="397"/>
    </location>
</feature>
<feature type="short sequence motif" description="Q motif">
    <location>
        <begin position="24"/>
        <end position="52"/>
    </location>
</feature>
<feature type="short sequence motif" description="DEAD box">
    <location>
        <begin position="173"/>
        <end position="176"/>
    </location>
</feature>
<feature type="binding site" evidence="2">
    <location>
        <begin position="68"/>
        <end position="75"/>
    </location>
    <ligand>
        <name>ATP</name>
        <dbReference type="ChEBI" id="CHEBI:30616"/>
    </ligand>
</feature>
<evidence type="ECO:0000250" key="1"/>
<evidence type="ECO:0000255" key="2">
    <source>
        <dbReference type="PROSITE-ProRule" id="PRU00541"/>
    </source>
</evidence>
<evidence type="ECO:0000255" key="3">
    <source>
        <dbReference type="PROSITE-ProRule" id="PRU00542"/>
    </source>
</evidence>
<evidence type="ECO:0000305" key="4"/>
<protein>
    <recommendedName>
        <fullName>ATP-dependent RNA helicase fal1</fullName>
        <ecNumber>3.6.4.13</ecNumber>
    </recommendedName>
</protein>
<organism>
    <name type="scientific">Aspergillus fumigatus (strain ATCC MYA-4609 / CBS 101355 / FGSC A1100 / Af293)</name>
    <name type="common">Neosartorya fumigata</name>
    <dbReference type="NCBI Taxonomy" id="330879"/>
    <lineage>
        <taxon>Eukaryota</taxon>
        <taxon>Fungi</taxon>
        <taxon>Dikarya</taxon>
        <taxon>Ascomycota</taxon>
        <taxon>Pezizomycotina</taxon>
        <taxon>Eurotiomycetes</taxon>
        <taxon>Eurotiomycetidae</taxon>
        <taxon>Eurotiales</taxon>
        <taxon>Aspergillaceae</taxon>
        <taxon>Aspergillus</taxon>
        <taxon>Aspergillus subgen. Fumigati</taxon>
    </lineage>
</organism>
<proteinExistence type="inferred from homology"/>
<reference key="1">
    <citation type="journal article" date="2005" name="Nature">
        <title>Genomic sequence of the pathogenic and allergenic filamentous fungus Aspergillus fumigatus.</title>
        <authorList>
            <person name="Nierman W.C."/>
            <person name="Pain A."/>
            <person name="Anderson M.J."/>
            <person name="Wortman J.R."/>
            <person name="Kim H.S."/>
            <person name="Arroyo J."/>
            <person name="Berriman M."/>
            <person name="Abe K."/>
            <person name="Archer D.B."/>
            <person name="Bermejo C."/>
            <person name="Bennett J.W."/>
            <person name="Bowyer P."/>
            <person name="Chen D."/>
            <person name="Collins M."/>
            <person name="Coulsen R."/>
            <person name="Davies R."/>
            <person name="Dyer P.S."/>
            <person name="Farman M.L."/>
            <person name="Fedorova N."/>
            <person name="Fedorova N.D."/>
            <person name="Feldblyum T.V."/>
            <person name="Fischer R."/>
            <person name="Fosker N."/>
            <person name="Fraser A."/>
            <person name="Garcia J.L."/>
            <person name="Garcia M.J."/>
            <person name="Goble A."/>
            <person name="Goldman G.H."/>
            <person name="Gomi K."/>
            <person name="Griffith-Jones S."/>
            <person name="Gwilliam R."/>
            <person name="Haas B.J."/>
            <person name="Haas H."/>
            <person name="Harris D.E."/>
            <person name="Horiuchi H."/>
            <person name="Huang J."/>
            <person name="Humphray S."/>
            <person name="Jimenez J."/>
            <person name="Keller N."/>
            <person name="Khouri H."/>
            <person name="Kitamoto K."/>
            <person name="Kobayashi T."/>
            <person name="Konzack S."/>
            <person name="Kulkarni R."/>
            <person name="Kumagai T."/>
            <person name="Lafton A."/>
            <person name="Latge J.-P."/>
            <person name="Li W."/>
            <person name="Lord A."/>
            <person name="Lu C."/>
            <person name="Majoros W.H."/>
            <person name="May G.S."/>
            <person name="Miller B.L."/>
            <person name="Mohamoud Y."/>
            <person name="Molina M."/>
            <person name="Monod M."/>
            <person name="Mouyna I."/>
            <person name="Mulligan S."/>
            <person name="Murphy L.D."/>
            <person name="O'Neil S."/>
            <person name="Paulsen I."/>
            <person name="Penalva M.A."/>
            <person name="Pertea M."/>
            <person name="Price C."/>
            <person name="Pritchard B.L."/>
            <person name="Quail M.A."/>
            <person name="Rabbinowitsch E."/>
            <person name="Rawlins N."/>
            <person name="Rajandream M.A."/>
            <person name="Reichard U."/>
            <person name="Renauld H."/>
            <person name="Robson G.D."/>
            <person name="Rodriguez de Cordoba S."/>
            <person name="Rodriguez-Pena J.M."/>
            <person name="Ronning C.M."/>
            <person name="Rutter S."/>
            <person name="Salzberg S.L."/>
            <person name="Sanchez M."/>
            <person name="Sanchez-Ferrero J.C."/>
            <person name="Saunders D."/>
            <person name="Seeger K."/>
            <person name="Squares R."/>
            <person name="Squares S."/>
            <person name="Takeuchi M."/>
            <person name="Tekaia F."/>
            <person name="Turner G."/>
            <person name="Vazquez de Aldana C.R."/>
            <person name="Weidman J."/>
            <person name="White O."/>
            <person name="Woodward J.R."/>
            <person name="Yu J.-H."/>
            <person name="Fraser C.M."/>
            <person name="Galagan J.E."/>
            <person name="Asai K."/>
            <person name="Machida M."/>
            <person name="Hall N."/>
            <person name="Barrell B.G."/>
            <person name="Denning D.W."/>
        </authorList>
    </citation>
    <scope>NUCLEOTIDE SEQUENCE [LARGE SCALE GENOMIC DNA]</scope>
    <source>
        <strain>ATCC MYA-4609 / CBS 101355 / FGSC A1100 / Af293</strain>
    </source>
</reference>
<sequence>MIWANGANSDRLEFSTSKEVTVAPTFEDMHLKESLLRGIYAYGYESPSAVQSRAIVQICKGRDTIAQAQSGTGKTATFSIGILQVIDTVVRETQALVLSPTRELATQIQSVIMALGDYMNVQCHACIGGTNIGEDIRKLDYGQHVVSGTPGRVADMIRRRHLRTRHIKMLVLDEADELLNRGFREQIYDVYRYLPPATQVVVVSATLPYDVLDMTTKFMTDPVRVLVKRDELTLEGIKQYFIAVEKEEWKFDTLCDLYDTLTITQAVIFCNTRRKVDWLTDKMREANFTVSSMHGEMPQKERDSIMQDFRQGNSRVLISTDVWARGIDVQQVSLVINYDLPTNRENYIHRIGRSGRFGRKGVAINFVTSDDVRILRDIELYYSTQIDEMPMNVADLLS</sequence>
<gene>
    <name type="primary">fal1</name>
    <name type="ORF">AFUA_5G02410</name>
</gene>
<keyword id="KW-0067">ATP-binding</keyword>
<keyword id="KW-0347">Helicase</keyword>
<keyword id="KW-0378">Hydrolase</keyword>
<keyword id="KW-0547">Nucleotide-binding</keyword>
<keyword id="KW-0539">Nucleus</keyword>
<keyword id="KW-1185">Reference proteome</keyword>
<keyword id="KW-0690">Ribosome biogenesis</keyword>
<keyword id="KW-0694">RNA-binding</keyword>
<keyword id="KW-0698">rRNA processing</keyword>
<name>FAL1_ASPFU</name>